<protein>
    <recommendedName>
        <fullName evidence="1">Sec-independent protein translocase protein TatB</fullName>
    </recommendedName>
</protein>
<proteinExistence type="inferred from homology"/>
<gene>
    <name evidence="1" type="primary">tatB</name>
    <name type="ordered locus">CFF8240_1119</name>
</gene>
<reference key="1">
    <citation type="submission" date="2006-11" db="EMBL/GenBank/DDBJ databases">
        <title>Sequence of Campylobacter fetus subsp. fetus 82-40.</title>
        <authorList>
            <person name="Fouts D.E."/>
            <person name="Nelson K.E."/>
        </authorList>
    </citation>
    <scope>NUCLEOTIDE SEQUENCE [LARGE SCALE GENOMIC DNA]</scope>
    <source>
        <strain>82-40</strain>
    </source>
</reference>
<comment type="function">
    <text evidence="1">Part of the twin-arginine translocation (Tat) system that transports large folded proteins containing a characteristic twin-arginine motif in their signal peptide across membranes. Together with TatC, TatB is part of a receptor directly interacting with Tat signal peptides. TatB may form an oligomeric binding site that transiently accommodates folded Tat precursor proteins before their translocation.</text>
</comment>
<comment type="subunit">
    <text evidence="1">The Tat system comprises two distinct complexes: a TatABC complex, containing multiple copies of TatA, TatB and TatC subunits, and a separate TatA complex, containing only TatA subunits. Substrates initially bind to the TatABC complex, which probably triggers association of the separate TatA complex to form the active translocon.</text>
</comment>
<comment type="subcellular location">
    <subcellularLocation>
        <location evidence="1">Cell inner membrane</location>
        <topology evidence="1">Single-pass membrane protein</topology>
    </subcellularLocation>
</comment>
<comment type="similarity">
    <text evidence="1">Belongs to the TatB family.</text>
</comment>
<organism>
    <name type="scientific">Campylobacter fetus subsp. fetus (strain 82-40)</name>
    <dbReference type="NCBI Taxonomy" id="360106"/>
    <lineage>
        <taxon>Bacteria</taxon>
        <taxon>Pseudomonadati</taxon>
        <taxon>Campylobacterota</taxon>
        <taxon>Epsilonproteobacteria</taxon>
        <taxon>Campylobacterales</taxon>
        <taxon>Campylobacteraceae</taxon>
        <taxon>Campylobacter</taxon>
    </lineage>
</organism>
<evidence type="ECO:0000255" key="1">
    <source>
        <dbReference type="HAMAP-Rule" id="MF_00237"/>
    </source>
</evidence>
<evidence type="ECO:0000256" key="2">
    <source>
        <dbReference type="SAM" id="MobiDB-lite"/>
    </source>
</evidence>
<dbReference type="EMBL" id="CP000487">
    <property type="protein sequence ID" value="ABK82222.1"/>
    <property type="molecule type" value="Genomic_DNA"/>
</dbReference>
<dbReference type="RefSeq" id="WP_002849729.1">
    <property type="nucleotide sequence ID" value="NC_008599.1"/>
</dbReference>
<dbReference type="SMR" id="A0RPZ4"/>
<dbReference type="GeneID" id="61064944"/>
<dbReference type="KEGG" id="cff:CFF8240_1119"/>
<dbReference type="eggNOG" id="COG1826">
    <property type="taxonomic scope" value="Bacteria"/>
</dbReference>
<dbReference type="HOGENOM" id="CLU_086034_0_1_7"/>
<dbReference type="Proteomes" id="UP000000760">
    <property type="component" value="Chromosome"/>
</dbReference>
<dbReference type="GO" id="GO:0033281">
    <property type="term" value="C:TAT protein transport complex"/>
    <property type="evidence" value="ECO:0007669"/>
    <property type="project" value="UniProtKB-UniRule"/>
</dbReference>
<dbReference type="GO" id="GO:0008320">
    <property type="term" value="F:protein transmembrane transporter activity"/>
    <property type="evidence" value="ECO:0007669"/>
    <property type="project" value="UniProtKB-UniRule"/>
</dbReference>
<dbReference type="GO" id="GO:0043953">
    <property type="term" value="P:protein transport by the Tat complex"/>
    <property type="evidence" value="ECO:0007669"/>
    <property type="project" value="UniProtKB-UniRule"/>
</dbReference>
<dbReference type="Gene3D" id="1.20.5.3310">
    <property type="match status" value="1"/>
</dbReference>
<dbReference type="HAMAP" id="MF_00237">
    <property type="entry name" value="TatB"/>
    <property type="match status" value="1"/>
</dbReference>
<dbReference type="InterPro" id="IPR003369">
    <property type="entry name" value="TatA/B/E"/>
</dbReference>
<dbReference type="InterPro" id="IPR018448">
    <property type="entry name" value="TatB"/>
</dbReference>
<dbReference type="NCBIfam" id="TIGR01410">
    <property type="entry name" value="tatB"/>
    <property type="match status" value="1"/>
</dbReference>
<dbReference type="PANTHER" id="PTHR33162">
    <property type="entry name" value="SEC-INDEPENDENT PROTEIN TRANSLOCASE PROTEIN TATA, CHLOROPLASTIC"/>
    <property type="match status" value="1"/>
</dbReference>
<dbReference type="PANTHER" id="PTHR33162:SF1">
    <property type="entry name" value="SEC-INDEPENDENT PROTEIN TRANSLOCASE PROTEIN TATA, CHLOROPLASTIC"/>
    <property type="match status" value="1"/>
</dbReference>
<dbReference type="Pfam" id="PF02416">
    <property type="entry name" value="TatA_B_E"/>
    <property type="match status" value="1"/>
</dbReference>
<dbReference type="PRINTS" id="PR01506">
    <property type="entry name" value="TATBPROTEIN"/>
</dbReference>
<feature type="chain" id="PRO_0000301159" description="Sec-independent protein translocase protein TatB">
    <location>
        <begin position="1"/>
        <end position="151"/>
    </location>
</feature>
<feature type="transmembrane region" description="Helical" evidence="1">
    <location>
        <begin position="1"/>
        <end position="21"/>
    </location>
</feature>
<feature type="region of interest" description="Disordered" evidence="2">
    <location>
        <begin position="120"/>
        <end position="151"/>
    </location>
</feature>
<feature type="compositionally biased region" description="Low complexity" evidence="2">
    <location>
        <begin position="120"/>
        <end position="131"/>
    </location>
</feature>
<feature type="compositionally biased region" description="Polar residues" evidence="2">
    <location>
        <begin position="132"/>
        <end position="142"/>
    </location>
</feature>
<keyword id="KW-0997">Cell inner membrane</keyword>
<keyword id="KW-1003">Cell membrane</keyword>
<keyword id="KW-0472">Membrane</keyword>
<keyword id="KW-0653">Protein transport</keyword>
<keyword id="KW-0811">Translocation</keyword>
<keyword id="KW-0812">Transmembrane</keyword>
<keyword id="KW-1133">Transmembrane helix</keyword>
<keyword id="KW-0813">Transport</keyword>
<name>TATB_CAMFF</name>
<accession>A0RPZ4</accession>
<sequence length="151" mass="16894">MFGMSLPEIIIIAVIAVIFLGPDKLPDAMVKIAKFFKLFKQTVNSAKSTFEQEVKIAELKEDAKKYKENITNAASSVRKKLTFEELDELKSTVSGTKNSINESLADIKKEITKDPLTLLNNDPLNNETLNEQPSKPSPNLNLENKEIKKEA</sequence>